<protein>
    <recommendedName>
        <fullName evidence="1">Guanylate kinase</fullName>
        <ecNumber evidence="1">2.7.4.8</ecNumber>
    </recommendedName>
    <alternativeName>
        <fullName evidence="1">GMP kinase</fullName>
    </alternativeName>
</protein>
<gene>
    <name evidence="1" type="primary">gmk</name>
    <name type="ordered locus">BPSL2563</name>
</gene>
<accession>Q63RV7</accession>
<reference key="1">
    <citation type="journal article" date="2004" name="Proc. Natl. Acad. Sci. U.S.A.">
        <title>Genomic plasticity of the causative agent of melioidosis, Burkholderia pseudomallei.</title>
        <authorList>
            <person name="Holden M.T.G."/>
            <person name="Titball R.W."/>
            <person name="Peacock S.J."/>
            <person name="Cerdeno-Tarraga A.-M."/>
            <person name="Atkins T."/>
            <person name="Crossman L.C."/>
            <person name="Pitt T."/>
            <person name="Churcher C."/>
            <person name="Mungall K.L."/>
            <person name="Bentley S.D."/>
            <person name="Sebaihia M."/>
            <person name="Thomson N.R."/>
            <person name="Bason N."/>
            <person name="Beacham I.R."/>
            <person name="Brooks K."/>
            <person name="Brown K.A."/>
            <person name="Brown N.F."/>
            <person name="Challis G.L."/>
            <person name="Cherevach I."/>
            <person name="Chillingworth T."/>
            <person name="Cronin A."/>
            <person name="Crossett B."/>
            <person name="Davis P."/>
            <person name="DeShazer D."/>
            <person name="Feltwell T."/>
            <person name="Fraser A."/>
            <person name="Hance Z."/>
            <person name="Hauser H."/>
            <person name="Holroyd S."/>
            <person name="Jagels K."/>
            <person name="Keith K.E."/>
            <person name="Maddison M."/>
            <person name="Moule S."/>
            <person name="Price C."/>
            <person name="Quail M.A."/>
            <person name="Rabbinowitsch E."/>
            <person name="Rutherford K."/>
            <person name="Sanders M."/>
            <person name="Simmonds M."/>
            <person name="Songsivilai S."/>
            <person name="Stevens K."/>
            <person name="Tumapa S."/>
            <person name="Vesaratchavest M."/>
            <person name="Whitehead S."/>
            <person name="Yeats C."/>
            <person name="Barrell B.G."/>
            <person name="Oyston P.C.F."/>
            <person name="Parkhill J."/>
        </authorList>
    </citation>
    <scope>NUCLEOTIDE SEQUENCE [LARGE SCALE GENOMIC DNA]</scope>
    <source>
        <strain>K96243</strain>
    </source>
</reference>
<organism>
    <name type="scientific">Burkholderia pseudomallei (strain K96243)</name>
    <dbReference type="NCBI Taxonomy" id="272560"/>
    <lineage>
        <taxon>Bacteria</taxon>
        <taxon>Pseudomonadati</taxon>
        <taxon>Pseudomonadota</taxon>
        <taxon>Betaproteobacteria</taxon>
        <taxon>Burkholderiales</taxon>
        <taxon>Burkholderiaceae</taxon>
        <taxon>Burkholderia</taxon>
        <taxon>pseudomallei group</taxon>
    </lineage>
</organism>
<keyword id="KW-0067">ATP-binding</keyword>
<keyword id="KW-0963">Cytoplasm</keyword>
<keyword id="KW-0418">Kinase</keyword>
<keyword id="KW-0547">Nucleotide-binding</keyword>
<keyword id="KW-1185">Reference proteome</keyword>
<keyword id="KW-0808">Transferase</keyword>
<comment type="function">
    <text evidence="1">Essential for recycling GMP and indirectly, cGMP.</text>
</comment>
<comment type="catalytic activity">
    <reaction evidence="1">
        <text>GMP + ATP = GDP + ADP</text>
        <dbReference type="Rhea" id="RHEA:20780"/>
        <dbReference type="ChEBI" id="CHEBI:30616"/>
        <dbReference type="ChEBI" id="CHEBI:58115"/>
        <dbReference type="ChEBI" id="CHEBI:58189"/>
        <dbReference type="ChEBI" id="CHEBI:456216"/>
        <dbReference type="EC" id="2.7.4.8"/>
    </reaction>
</comment>
<comment type="subcellular location">
    <subcellularLocation>
        <location evidence="1">Cytoplasm</location>
    </subcellularLocation>
</comment>
<comment type="similarity">
    <text evidence="1">Belongs to the guanylate kinase family.</text>
</comment>
<dbReference type="EC" id="2.7.4.8" evidence="1"/>
<dbReference type="EMBL" id="BX571965">
    <property type="protein sequence ID" value="CAH36571.1"/>
    <property type="molecule type" value="Genomic_DNA"/>
</dbReference>
<dbReference type="RefSeq" id="WP_004185877.1">
    <property type="nucleotide sequence ID" value="NZ_CP009538.1"/>
</dbReference>
<dbReference type="RefSeq" id="YP_109160.1">
    <property type="nucleotide sequence ID" value="NC_006350.1"/>
</dbReference>
<dbReference type="SMR" id="Q63RV7"/>
<dbReference type="STRING" id="272560.BPSL2563"/>
<dbReference type="GeneID" id="93061156"/>
<dbReference type="KEGG" id="bps:BPSL2563"/>
<dbReference type="PATRIC" id="fig|272560.51.peg.2801"/>
<dbReference type="eggNOG" id="COG0194">
    <property type="taxonomic scope" value="Bacteria"/>
</dbReference>
<dbReference type="Proteomes" id="UP000000605">
    <property type="component" value="Chromosome 1"/>
</dbReference>
<dbReference type="GO" id="GO:0005829">
    <property type="term" value="C:cytosol"/>
    <property type="evidence" value="ECO:0007669"/>
    <property type="project" value="TreeGrafter"/>
</dbReference>
<dbReference type="GO" id="GO:0005524">
    <property type="term" value="F:ATP binding"/>
    <property type="evidence" value="ECO:0007669"/>
    <property type="project" value="UniProtKB-UniRule"/>
</dbReference>
<dbReference type="GO" id="GO:0004385">
    <property type="term" value="F:guanylate kinase activity"/>
    <property type="evidence" value="ECO:0007669"/>
    <property type="project" value="UniProtKB-UniRule"/>
</dbReference>
<dbReference type="CDD" id="cd00071">
    <property type="entry name" value="GMPK"/>
    <property type="match status" value="1"/>
</dbReference>
<dbReference type="FunFam" id="3.30.63.10:FF:000002">
    <property type="entry name" value="Guanylate kinase 1"/>
    <property type="match status" value="1"/>
</dbReference>
<dbReference type="Gene3D" id="3.30.63.10">
    <property type="entry name" value="Guanylate Kinase phosphate binding domain"/>
    <property type="match status" value="1"/>
</dbReference>
<dbReference type="Gene3D" id="3.40.50.300">
    <property type="entry name" value="P-loop containing nucleotide triphosphate hydrolases"/>
    <property type="match status" value="1"/>
</dbReference>
<dbReference type="HAMAP" id="MF_00328">
    <property type="entry name" value="Guanylate_kinase"/>
    <property type="match status" value="1"/>
</dbReference>
<dbReference type="InterPro" id="IPR008145">
    <property type="entry name" value="GK/Ca_channel_bsu"/>
</dbReference>
<dbReference type="InterPro" id="IPR008144">
    <property type="entry name" value="Guanylate_kin-like_dom"/>
</dbReference>
<dbReference type="InterPro" id="IPR017665">
    <property type="entry name" value="Guanylate_kinase"/>
</dbReference>
<dbReference type="InterPro" id="IPR020590">
    <property type="entry name" value="Guanylate_kinase_CS"/>
</dbReference>
<dbReference type="InterPro" id="IPR027417">
    <property type="entry name" value="P-loop_NTPase"/>
</dbReference>
<dbReference type="NCBIfam" id="TIGR03263">
    <property type="entry name" value="guanyl_kin"/>
    <property type="match status" value="1"/>
</dbReference>
<dbReference type="PANTHER" id="PTHR23117:SF13">
    <property type="entry name" value="GUANYLATE KINASE"/>
    <property type="match status" value="1"/>
</dbReference>
<dbReference type="PANTHER" id="PTHR23117">
    <property type="entry name" value="GUANYLATE KINASE-RELATED"/>
    <property type="match status" value="1"/>
</dbReference>
<dbReference type="Pfam" id="PF00625">
    <property type="entry name" value="Guanylate_kin"/>
    <property type="match status" value="1"/>
</dbReference>
<dbReference type="SMART" id="SM00072">
    <property type="entry name" value="GuKc"/>
    <property type="match status" value="1"/>
</dbReference>
<dbReference type="SUPFAM" id="SSF52540">
    <property type="entry name" value="P-loop containing nucleoside triphosphate hydrolases"/>
    <property type="match status" value="1"/>
</dbReference>
<dbReference type="PROSITE" id="PS00856">
    <property type="entry name" value="GUANYLATE_KINASE_1"/>
    <property type="match status" value="1"/>
</dbReference>
<dbReference type="PROSITE" id="PS50052">
    <property type="entry name" value="GUANYLATE_KINASE_2"/>
    <property type="match status" value="1"/>
</dbReference>
<evidence type="ECO:0000255" key="1">
    <source>
        <dbReference type="HAMAP-Rule" id="MF_00328"/>
    </source>
</evidence>
<feature type="chain" id="PRO_0000170514" description="Guanylate kinase">
    <location>
        <begin position="1"/>
        <end position="227"/>
    </location>
</feature>
<feature type="domain" description="Guanylate kinase-like" evidence="1">
    <location>
        <begin position="21"/>
        <end position="199"/>
    </location>
</feature>
<feature type="binding site" evidence="1">
    <location>
        <begin position="28"/>
        <end position="35"/>
    </location>
    <ligand>
        <name>ATP</name>
        <dbReference type="ChEBI" id="CHEBI:30616"/>
    </ligand>
</feature>
<name>KGUA_BURPS</name>
<proteinExistence type="inferred from homology"/>
<sequence length="227" mass="25459">MTDSNRDGAAAHSLHAGVYPGNLFMVVAPSGAGKSTLVNALLSKDPEIRLSISYTTRKPRPGEQDGQHYHFTTVEDFRERHARHEFLESAEVHGNYYGTSRVWIEEQMKIGHDVLLEIDWQGAQQVKKQFRNAVGIFILPPSLAALEERLKKRGQDEPNVITRRLLAAGSEIAHAAEAQYVVINETFEHALAELECIVAATRLRFTSQYARHAELFVELGIHLPHAE</sequence>